<dbReference type="EMBL" id="CP017630">
    <property type="protein sequence ID" value="AOW30781.1"/>
    <property type="molecule type" value="Genomic_DNA"/>
</dbReference>
<dbReference type="RefSeq" id="XP_718685.1">
    <property type="nucleotide sequence ID" value="XM_713592.1"/>
</dbReference>
<dbReference type="SMR" id="Q5AAG1"/>
<dbReference type="BioGRID" id="1222826">
    <property type="interactions" value="1"/>
</dbReference>
<dbReference type="FunCoup" id="Q5AAG1">
    <property type="interactions" value="248"/>
</dbReference>
<dbReference type="STRING" id="237561.Q5AAG1"/>
<dbReference type="EnsemblFungi" id="CR_00100C_A-T">
    <property type="protein sequence ID" value="CR_00100C_A-T-p1"/>
    <property type="gene ID" value="CR_00100C_A"/>
</dbReference>
<dbReference type="GeneID" id="3639732"/>
<dbReference type="KEGG" id="cal:CAALFM_CR00100CA"/>
<dbReference type="CGD" id="CAL0000195210">
    <property type="gene designation" value="EPL1"/>
</dbReference>
<dbReference type="VEuPathDB" id="FungiDB:CR_00100C_A"/>
<dbReference type="eggNOG" id="KOG2261">
    <property type="taxonomic scope" value="Eukaryota"/>
</dbReference>
<dbReference type="HOGENOM" id="CLU_010580_0_0_1"/>
<dbReference type="InParanoid" id="Q5AAG1"/>
<dbReference type="OMA" id="MLGTKSY"/>
<dbReference type="OrthoDB" id="435275at2759"/>
<dbReference type="Proteomes" id="UP000000559">
    <property type="component" value="Chromosome R"/>
</dbReference>
<dbReference type="GO" id="GO:0035267">
    <property type="term" value="C:NuA4 histone acetyltransferase complex"/>
    <property type="evidence" value="ECO:0000314"/>
    <property type="project" value="CGD"/>
</dbReference>
<dbReference type="GO" id="GO:0000786">
    <property type="term" value="C:nucleosome"/>
    <property type="evidence" value="ECO:0007669"/>
    <property type="project" value="EnsemblFungi"/>
</dbReference>
<dbReference type="GO" id="GO:0005634">
    <property type="term" value="C:nucleus"/>
    <property type="evidence" value="ECO:0007669"/>
    <property type="project" value="UniProtKB-SubCell"/>
</dbReference>
<dbReference type="GO" id="GO:0032777">
    <property type="term" value="C:piccolo histone acetyltransferase complex"/>
    <property type="evidence" value="ECO:0000318"/>
    <property type="project" value="GO_Central"/>
</dbReference>
<dbReference type="GO" id="GO:0004402">
    <property type="term" value="F:histone acetyltransferase activity"/>
    <property type="evidence" value="ECO:0007669"/>
    <property type="project" value="EnsemblFungi"/>
</dbReference>
<dbReference type="GO" id="GO:0006281">
    <property type="term" value="P:DNA repair"/>
    <property type="evidence" value="ECO:0007669"/>
    <property type="project" value="UniProtKB-KW"/>
</dbReference>
<dbReference type="GO" id="GO:0016239">
    <property type="term" value="P:positive regulation of macroautophagy"/>
    <property type="evidence" value="ECO:0007669"/>
    <property type="project" value="EnsemblFungi"/>
</dbReference>
<dbReference type="GO" id="GO:0006357">
    <property type="term" value="P:regulation of transcription by RNA polymerase II"/>
    <property type="evidence" value="ECO:0000318"/>
    <property type="project" value="GO_Central"/>
</dbReference>
<dbReference type="InterPro" id="IPR024943">
    <property type="entry name" value="Enhancer_polycomb"/>
</dbReference>
<dbReference type="InterPro" id="IPR019542">
    <property type="entry name" value="Enhancer_polycomb-like_N"/>
</dbReference>
<dbReference type="PANTHER" id="PTHR14898">
    <property type="entry name" value="ENHANCER OF POLYCOMB"/>
    <property type="match status" value="1"/>
</dbReference>
<dbReference type="Pfam" id="PF10513">
    <property type="entry name" value="EPL1"/>
    <property type="match status" value="1"/>
</dbReference>
<name>EPL1_CANAL</name>
<sequence length="753" mass="87442">MAAAPPPPAKNQGKAKQHVTGARFRQRKISVKQPLTIYKQRDLPTLDSNELEPSQVHHLNSNASSSSTQQPRDLHAVETGVDKNEEEEVHLQQVINAAQKALLGSKKEEKSSDMYIPTPDASRIWPEAHKYYKDQKFKQPETYIKFSATVEDTVGVEYNMDEVDEKFYRETLCKYYPKKKNKSDENNRKCTELEFETICDKLEKTIEARQPFLSMDPSNILSYEELSSYIVDQFKSAVKTSNPYIVTNGGNLEYISTTALKERLSKEIKYEPFVTIFDKNQMSTSAVRPIPKLFELFGRPVYDHWKERKIERKGKTIQPTLKFEDPNSNEKENDNDPYICFRRREFRQARKTRRADTIGAERIRSMQKSLHRARDLIMSVSEREILKLDNFQAEHELFKARCATKACKRELNIKGDEYLFFPHKKKKIVRTEDEEREKKREKKKQDQELALKQQQALQQQQQQPPQPPQQAPSKQDGTSTSQPYVKLPPAKVPDMDLVTVSLVLKEKNETIKRAVLEKLRKRKEHDKGFINLTDDPYQPFFDISTNRAEELSHIPYSSIAATHYHQFNTSNYMNDQLKKLLEEKKPLPGVKTFLGSNGELVPSKAFPHLSSLLEEKYKATSGYIERLLQSVETQDFSSYTNGFKDVEPKETNEPVMAFPQRIRRRVGRAGRVFLDHQQEYPQPNFQQDTDRVGGIPDVYCKEDAIKRLQSKWKFDTEYKTTEPFSLDPSKLNGISPSTQSIRFGSMLLNRTRK</sequence>
<keyword id="KW-0131">Cell cycle</keyword>
<keyword id="KW-0227">DNA damage</keyword>
<keyword id="KW-0234">DNA repair</keyword>
<keyword id="KW-0539">Nucleus</keyword>
<keyword id="KW-1185">Reference proteome</keyword>
<keyword id="KW-0804">Transcription</keyword>
<keyword id="KW-0805">Transcription regulation</keyword>
<protein>
    <recommendedName>
        <fullName>Enhancer of polycomb-like protein 1</fullName>
    </recommendedName>
</protein>
<gene>
    <name type="primary">EPL1</name>
    <name type="ordered locus">CAALFM_CR00100CA</name>
    <name type="ORF">CaO19.7529</name>
</gene>
<evidence type="ECO:0000250" key="1"/>
<evidence type="ECO:0000256" key="2">
    <source>
        <dbReference type="SAM" id="MobiDB-lite"/>
    </source>
</evidence>
<evidence type="ECO:0000305" key="3"/>
<accession>Q5AAG1</accession>
<accession>A0A1D8PRL5</accession>
<feature type="chain" id="PRO_0000214157" description="Enhancer of polycomb-like protein 1">
    <location>
        <begin position="1"/>
        <end position="753"/>
    </location>
</feature>
<feature type="region of interest" description="Disordered" evidence="2">
    <location>
        <begin position="1"/>
        <end position="75"/>
    </location>
</feature>
<feature type="region of interest" description="Disordered" evidence="2">
    <location>
        <begin position="429"/>
        <end position="490"/>
    </location>
</feature>
<feature type="compositionally biased region" description="Polar residues" evidence="2">
    <location>
        <begin position="46"/>
        <end position="71"/>
    </location>
</feature>
<feature type="compositionally biased region" description="Basic and acidic residues" evidence="2">
    <location>
        <begin position="429"/>
        <end position="449"/>
    </location>
</feature>
<feature type="compositionally biased region" description="Low complexity" evidence="2">
    <location>
        <begin position="450"/>
        <end position="463"/>
    </location>
</feature>
<comment type="function">
    <text evidence="1">Component of the NuA4 histone acetyltransferase complex which is involved in transcriptional activation of selected genes principally by acetylation of nucleosomal histone H4 and H2A. The NuA4 complex is also involved in DNA repair. Involved in gene silencing by neighboring heterochromatin, blockage of the silencing spreading along the chromosome, and required for cell cycle progression through G2/M (By similarity).</text>
</comment>
<comment type="subunit">
    <text evidence="1">Component of the NuA4 histone acetyltransferase complex.</text>
</comment>
<comment type="subcellular location">
    <subcellularLocation>
        <location evidence="1">Nucleus</location>
    </subcellularLocation>
</comment>
<comment type="similarity">
    <text evidence="3">Belongs to the enhancer of polycomb family.</text>
</comment>
<organism>
    <name type="scientific">Candida albicans (strain SC5314 / ATCC MYA-2876)</name>
    <name type="common">Yeast</name>
    <dbReference type="NCBI Taxonomy" id="237561"/>
    <lineage>
        <taxon>Eukaryota</taxon>
        <taxon>Fungi</taxon>
        <taxon>Dikarya</taxon>
        <taxon>Ascomycota</taxon>
        <taxon>Saccharomycotina</taxon>
        <taxon>Pichiomycetes</taxon>
        <taxon>Debaryomycetaceae</taxon>
        <taxon>Candida/Lodderomyces clade</taxon>
        <taxon>Candida</taxon>
    </lineage>
</organism>
<reference key="1">
    <citation type="journal article" date="2004" name="Proc. Natl. Acad. Sci. U.S.A.">
        <title>The diploid genome sequence of Candida albicans.</title>
        <authorList>
            <person name="Jones T."/>
            <person name="Federspiel N.A."/>
            <person name="Chibana H."/>
            <person name="Dungan J."/>
            <person name="Kalman S."/>
            <person name="Magee B.B."/>
            <person name="Newport G."/>
            <person name="Thorstenson Y.R."/>
            <person name="Agabian N."/>
            <person name="Magee P.T."/>
            <person name="Davis R.W."/>
            <person name="Scherer S."/>
        </authorList>
    </citation>
    <scope>NUCLEOTIDE SEQUENCE [LARGE SCALE GENOMIC DNA]</scope>
    <source>
        <strain>SC5314 / ATCC MYA-2876</strain>
    </source>
</reference>
<reference key="2">
    <citation type="journal article" date="2007" name="Genome Biol.">
        <title>Assembly of the Candida albicans genome into sixteen supercontigs aligned on the eight chromosomes.</title>
        <authorList>
            <person name="van het Hoog M."/>
            <person name="Rast T.J."/>
            <person name="Martchenko M."/>
            <person name="Grindle S."/>
            <person name="Dignard D."/>
            <person name="Hogues H."/>
            <person name="Cuomo C."/>
            <person name="Berriman M."/>
            <person name="Scherer S."/>
            <person name="Magee B.B."/>
            <person name="Whiteway M."/>
            <person name="Chibana H."/>
            <person name="Nantel A."/>
            <person name="Magee P.T."/>
        </authorList>
    </citation>
    <scope>GENOME REANNOTATION</scope>
    <source>
        <strain>SC5314 / ATCC MYA-2876</strain>
    </source>
</reference>
<reference key="3">
    <citation type="journal article" date="2013" name="Genome Biol.">
        <title>Assembly of a phased diploid Candida albicans genome facilitates allele-specific measurements and provides a simple model for repeat and indel structure.</title>
        <authorList>
            <person name="Muzzey D."/>
            <person name="Schwartz K."/>
            <person name="Weissman J.S."/>
            <person name="Sherlock G."/>
        </authorList>
    </citation>
    <scope>NUCLEOTIDE SEQUENCE [LARGE SCALE GENOMIC DNA]</scope>
    <scope>GENOME REANNOTATION</scope>
    <source>
        <strain>SC5314 / ATCC MYA-2876</strain>
    </source>
</reference>
<proteinExistence type="inferred from homology"/>